<gene>
    <name evidence="1" type="primary">dnaA</name>
    <name type="ordered locus">BcerKBAB4_0001</name>
</gene>
<evidence type="ECO:0000255" key="1">
    <source>
        <dbReference type="HAMAP-Rule" id="MF_00377"/>
    </source>
</evidence>
<proteinExistence type="inferred from homology"/>
<organism>
    <name type="scientific">Bacillus mycoides (strain KBAB4)</name>
    <name type="common">Bacillus weihenstephanensis</name>
    <dbReference type="NCBI Taxonomy" id="315730"/>
    <lineage>
        <taxon>Bacteria</taxon>
        <taxon>Bacillati</taxon>
        <taxon>Bacillota</taxon>
        <taxon>Bacilli</taxon>
        <taxon>Bacillales</taxon>
        <taxon>Bacillaceae</taxon>
        <taxon>Bacillus</taxon>
        <taxon>Bacillus cereus group</taxon>
    </lineage>
</organism>
<dbReference type="EMBL" id="CP000903">
    <property type="protein sequence ID" value="ABY41270.1"/>
    <property type="molecule type" value="Genomic_DNA"/>
</dbReference>
<dbReference type="RefSeq" id="WP_002016481.1">
    <property type="nucleotide sequence ID" value="NC_010184.1"/>
</dbReference>
<dbReference type="SMR" id="A9VM90"/>
<dbReference type="GeneID" id="66264954"/>
<dbReference type="KEGG" id="bwe:BcerKBAB4_0001"/>
<dbReference type="eggNOG" id="COG0593">
    <property type="taxonomic scope" value="Bacteria"/>
</dbReference>
<dbReference type="HOGENOM" id="CLU_026910_3_1_9"/>
<dbReference type="Proteomes" id="UP000002154">
    <property type="component" value="Chromosome"/>
</dbReference>
<dbReference type="GO" id="GO:0005737">
    <property type="term" value="C:cytoplasm"/>
    <property type="evidence" value="ECO:0007669"/>
    <property type="project" value="UniProtKB-SubCell"/>
</dbReference>
<dbReference type="GO" id="GO:0005886">
    <property type="term" value="C:plasma membrane"/>
    <property type="evidence" value="ECO:0007669"/>
    <property type="project" value="TreeGrafter"/>
</dbReference>
<dbReference type="GO" id="GO:0005524">
    <property type="term" value="F:ATP binding"/>
    <property type="evidence" value="ECO:0007669"/>
    <property type="project" value="UniProtKB-UniRule"/>
</dbReference>
<dbReference type="GO" id="GO:0016887">
    <property type="term" value="F:ATP hydrolysis activity"/>
    <property type="evidence" value="ECO:0007669"/>
    <property type="project" value="InterPro"/>
</dbReference>
<dbReference type="GO" id="GO:0003688">
    <property type="term" value="F:DNA replication origin binding"/>
    <property type="evidence" value="ECO:0007669"/>
    <property type="project" value="UniProtKB-UniRule"/>
</dbReference>
<dbReference type="GO" id="GO:0008289">
    <property type="term" value="F:lipid binding"/>
    <property type="evidence" value="ECO:0007669"/>
    <property type="project" value="UniProtKB-KW"/>
</dbReference>
<dbReference type="GO" id="GO:0006270">
    <property type="term" value="P:DNA replication initiation"/>
    <property type="evidence" value="ECO:0007669"/>
    <property type="project" value="UniProtKB-UniRule"/>
</dbReference>
<dbReference type="GO" id="GO:0006275">
    <property type="term" value="P:regulation of DNA replication"/>
    <property type="evidence" value="ECO:0007669"/>
    <property type="project" value="UniProtKB-UniRule"/>
</dbReference>
<dbReference type="CDD" id="cd00009">
    <property type="entry name" value="AAA"/>
    <property type="match status" value="1"/>
</dbReference>
<dbReference type="CDD" id="cd06571">
    <property type="entry name" value="Bac_DnaA_C"/>
    <property type="match status" value="1"/>
</dbReference>
<dbReference type="FunFam" id="1.10.1750.10:FF:000003">
    <property type="entry name" value="Chromosomal replication initiator protein DnaA"/>
    <property type="match status" value="1"/>
</dbReference>
<dbReference type="FunFam" id="1.10.8.60:FF:000003">
    <property type="entry name" value="Chromosomal replication initiator protein DnaA"/>
    <property type="match status" value="1"/>
</dbReference>
<dbReference type="FunFam" id="3.30.300.180:FF:000002">
    <property type="entry name" value="Chromosomal replication initiator protein DnaA"/>
    <property type="match status" value="1"/>
</dbReference>
<dbReference type="FunFam" id="3.40.50.300:FF:000150">
    <property type="entry name" value="Chromosomal replication initiator protein DnaA"/>
    <property type="match status" value="1"/>
</dbReference>
<dbReference type="Gene3D" id="1.10.1750.10">
    <property type="match status" value="1"/>
</dbReference>
<dbReference type="Gene3D" id="1.10.8.60">
    <property type="match status" value="1"/>
</dbReference>
<dbReference type="Gene3D" id="3.30.300.180">
    <property type="match status" value="1"/>
</dbReference>
<dbReference type="Gene3D" id="3.40.50.300">
    <property type="entry name" value="P-loop containing nucleotide triphosphate hydrolases"/>
    <property type="match status" value="1"/>
</dbReference>
<dbReference type="HAMAP" id="MF_00377">
    <property type="entry name" value="DnaA_bact"/>
    <property type="match status" value="1"/>
</dbReference>
<dbReference type="InterPro" id="IPR003593">
    <property type="entry name" value="AAA+_ATPase"/>
</dbReference>
<dbReference type="InterPro" id="IPR001957">
    <property type="entry name" value="Chromosome_initiator_DnaA"/>
</dbReference>
<dbReference type="InterPro" id="IPR020591">
    <property type="entry name" value="Chromosome_initiator_DnaA-like"/>
</dbReference>
<dbReference type="InterPro" id="IPR018312">
    <property type="entry name" value="Chromosome_initiator_DnaA_CS"/>
</dbReference>
<dbReference type="InterPro" id="IPR013159">
    <property type="entry name" value="DnaA_C"/>
</dbReference>
<dbReference type="InterPro" id="IPR013317">
    <property type="entry name" value="DnaA_dom"/>
</dbReference>
<dbReference type="InterPro" id="IPR024633">
    <property type="entry name" value="DnaA_N_dom"/>
</dbReference>
<dbReference type="InterPro" id="IPR038454">
    <property type="entry name" value="DnaA_N_sf"/>
</dbReference>
<dbReference type="InterPro" id="IPR027417">
    <property type="entry name" value="P-loop_NTPase"/>
</dbReference>
<dbReference type="InterPro" id="IPR010921">
    <property type="entry name" value="Trp_repressor/repl_initiator"/>
</dbReference>
<dbReference type="NCBIfam" id="TIGR00362">
    <property type="entry name" value="DnaA"/>
    <property type="match status" value="1"/>
</dbReference>
<dbReference type="NCBIfam" id="NF010686">
    <property type="entry name" value="PRK14086.1"/>
    <property type="match status" value="1"/>
</dbReference>
<dbReference type="PANTHER" id="PTHR30050">
    <property type="entry name" value="CHROMOSOMAL REPLICATION INITIATOR PROTEIN DNAA"/>
    <property type="match status" value="1"/>
</dbReference>
<dbReference type="PANTHER" id="PTHR30050:SF2">
    <property type="entry name" value="CHROMOSOMAL REPLICATION INITIATOR PROTEIN DNAA"/>
    <property type="match status" value="1"/>
</dbReference>
<dbReference type="Pfam" id="PF00308">
    <property type="entry name" value="Bac_DnaA"/>
    <property type="match status" value="1"/>
</dbReference>
<dbReference type="Pfam" id="PF08299">
    <property type="entry name" value="Bac_DnaA_C"/>
    <property type="match status" value="1"/>
</dbReference>
<dbReference type="Pfam" id="PF11638">
    <property type="entry name" value="DnaA_N"/>
    <property type="match status" value="1"/>
</dbReference>
<dbReference type="PRINTS" id="PR00051">
    <property type="entry name" value="DNAA"/>
</dbReference>
<dbReference type="SMART" id="SM00382">
    <property type="entry name" value="AAA"/>
    <property type="match status" value="1"/>
</dbReference>
<dbReference type="SMART" id="SM00760">
    <property type="entry name" value="Bac_DnaA_C"/>
    <property type="match status" value="1"/>
</dbReference>
<dbReference type="SUPFAM" id="SSF52540">
    <property type="entry name" value="P-loop containing nucleoside triphosphate hydrolases"/>
    <property type="match status" value="1"/>
</dbReference>
<dbReference type="SUPFAM" id="SSF48295">
    <property type="entry name" value="TrpR-like"/>
    <property type="match status" value="1"/>
</dbReference>
<dbReference type="PROSITE" id="PS01008">
    <property type="entry name" value="DNAA"/>
    <property type="match status" value="1"/>
</dbReference>
<comment type="function">
    <text evidence="1">Plays an essential role in the initiation and regulation of chromosomal replication. ATP-DnaA binds to the origin of replication (oriC) to initiate formation of the DNA replication initiation complex once per cell cycle. Binds the DnaA box (a 9 base pair repeat at the origin) and separates the double-stranded (ds)DNA. Forms a right-handed helical filament on oriC DNA; dsDNA binds to the exterior of the filament while single-stranded (ss)DNA is stabiized in the filament's interior. The ATP-DnaA-oriC complex binds and stabilizes one strand of the AT-rich DNA unwinding element (DUE), permitting loading of DNA polymerase. After initiation quickly degrades to an ADP-DnaA complex that is not apt for DNA replication. Binds acidic phospholipids.</text>
</comment>
<comment type="subunit">
    <text evidence="1">Oligomerizes as a right-handed, spiral filament on DNA at oriC.</text>
</comment>
<comment type="subcellular location">
    <subcellularLocation>
        <location evidence="1">Cytoplasm</location>
    </subcellularLocation>
</comment>
<comment type="domain">
    <text evidence="1">Domain I is involved in oligomerization and binding regulators, domain II is flexibile and of varying length in different bacteria, domain III forms the AAA+ region, while domain IV binds dsDNA.</text>
</comment>
<comment type="similarity">
    <text evidence="1">Belongs to the DnaA family.</text>
</comment>
<accession>A9VM90</accession>
<sequence>MENISDLWNSALKELEKKVSKPSYETWLKSTTAHNLKKDVLTITAPNEFARDWLESHYSELISETLYDLTGAKLAIRFIIPQSQAEEDIDLPSVKQKHAHDESNHLPQSMLNPKYTFDTFVIGSGNRFAHAASLAVAEAPAKAYNPLFIYGGVGLGKTHLMHAIGHYVIEHNPNAKVVYLSSEKFTNEFINSIRDNKAVDFRNKYRNVDVLLIDDIQFLAGKEQTQEEFFHTFNALHEESKQIVISSDRPPKEIPTLEDRLRSRFEWGLITDITPPDLETRIAILRKKAKAEGLDIPNEVMLYIANQIDSNIRELEGALIRVVAYSSLINKDMNADLAAEALKNIIPNSIPRIISISDIQKAVGGVYQVKLEDFKAKKRTKSVAFPRQIAMYLSRELTDSSLPKIGEEFGGRDHTTVIHAHEKISKLLKTDTQLQKHVEEVKDILK</sequence>
<feature type="chain" id="PRO_1000121948" description="Chromosomal replication initiator protein DnaA">
    <location>
        <begin position="1"/>
        <end position="446"/>
    </location>
</feature>
<feature type="region of interest" description="Domain I, interacts with DnaA modulators" evidence="1">
    <location>
        <begin position="1"/>
        <end position="81"/>
    </location>
</feature>
<feature type="region of interest" description="Domain II" evidence="1">
    <location>
        <begin position="81"/>
        <end position="109"/>
    </location>
</feature>
<feature type="region of interest" description="Domain III, AAA+ region" evidence="1">
    <location>
        <begin position="110"/>
        <end position="326"/>
    </location>
</feature>
<feature type="region of interest" description="Domain IV, binds dsDNA" evidence="1">
    <location>
        <begin position="327"/>
        <end position="446"/>
    </location>
</feature>
<feature type="binding site" evidence="1">
    <location>
        <position position="154"/>
    </location>
    <ligand>
        <name>ATP</name>
        <dbReference type="ChEBI" id="CHEBI:30616"/>
    </ligand>
</feature>
<feature type="binding site" evidence="1">
    <location>
        <position position="156"/>
    </location>
    <ligand>
        <name>ATP</name>
        <dbReference type="ChEBI" id="CHEBI:30616"/>
    </ligand>
</feature>
<feature type="binding site" evidence="1">
    <location>
        <position position="157"/>
    </location>
    <ligand>
        <name>ATP</name>
        <dbReference type="ChEBI" id="CHEBI:30616"/>
    </ligand>
</feature>
<feature type="binding site" evidence="1">
    <location>
        <position position="158"/>
    </location>
    <ligand>
        <name>ATP</name>
        <dbReference type="ChEBI" id="CHEBI:30616"/>
    </ligand>
</feature>
<protein>
    <recommendedName>
        <fullName evidence="1">Chromosomal replication initiator protein DnaA</fullName>
    </recommendedName>
</protein>
<keyword id="KW-0067">ATP-binding</keyword>
<keyword id="KW-0963">Cytoplasm</keyword>
<keyword id="KW-0235">DNA replication</keyword>
<keyword id="KW-0238">DNA-binding</keyword>
<keyword id="KW-0446">Lipid-binding</keyword>
<keyword id="KW-0547">Nucleotide-binding</keyword>
<reference key="1">
    <citation type="journal article" date="2008" name="Chem. Biol. Interact.">
        <title>Extending the Bacillus cereus group genomics to putative food-borne pathogens of different toxicity.</title>
        <authorList>
            <person name="Lapidus A."/>
            <person name="Goltsman E."/>
            <person name="Auger S."/>
            <person name="Galleron N."/>
            <person name="Segurens B."/>
            <person name="Dossat C."/>
            <person name="Land M.L."/>
            <person name="Broussolle V."/>
            <person name="Brillard J."/>
            <person name="Guinebretiere M.-H."/>
            <person name="Sanchis V."/>
            <person name="Nguen-the C."/>
            <person name="Lereclus D."/>
            <person name="Richardson P."/>
            <person name="Wincker P."/>
            <person name="Weissenbach J."/>
            <person name="Ehrlich S.D."/>
            <person name="Sorokin A."/>
        </authorList>
    </citation>
    <scope>NUCLEOTIDE SEQUENCE [LARGE SCALE GENOMIC DNA]</scope>
    <source>
        <strain>KBAB4</strain>
    </source>
</reference>
<name>DNAA_BACMK</name>